<gene>
    <name evidence="1" type="primary">gcvT</name>
    <name type="ordered locus">XOO1794</name>
</gene>
<evidence type="ECO:0000255" key="1">
    <source>
        <dbReference type="HAMAP-Rule" id="MF_00259"/>
    </source>
</evidence>
<name>GCST_XANOR</name>
<protein>
    <recommendedName>
        <fullName evidence="1">Aminomethyltransferase</fullName>
        <ecNumber evidence="1">2.1.2.10</ecNumber>
    </recommendedName>
    <alternativeName>
        <fullName evidence="1">Glycine cleavage system T protein</fullName>
    </alternativeName>
</protein>
<feature type="chain" id="PRO_1000047729" description="Aminomethyltransferase">
    <location>
        <begin position="1"/>
        <end position="369"/>
    </location>
</feature>
<reference key="1">
    <citation type="journal article" date="2005" name="Nucleic Acids Res.">
        <title>The genome sequence of Xanthomonas oryzae pathovar oryzae KACC10331, the bacterial blight pathogen of rice.</title>
        <authorList>
            <person name="Lee B.-M."/>
            <person name="Park Y.-J."/>
            <person name="Park D.-S."/>
            <person name="Kang H.-W."/>
            <person name="Kim J.-G."/>
            <person name="Song E.-S."/>
            <person name="Park I.-C."/>
            <person name="Yoon U.-H."/>
            <person name="Hahn J.-H."/>
            <person name="Koo B.-S."/>
            <person name="Lee G.-B."/>
            <person name="Kim H."/>
            <person name="Park H.-S."/>
            <person name="Yoon K.-O."/>
            <person name="Kim J.-H."/>
            <person name="Jung C.-H."/>
            <person name="Koh N.-H."/>
            <person name="Seo J.-S."/>
            <person name="Go S.-J."/>
        </authorList>
    </citation>
    <scope>NUCLEOTIDE SEQUENCE [LARGE SCALE GENOMIC DNA]</scope>
    <source>
        <strain>KACC10331 / KXO85</strain>
    </source>
</reference>
<accession>Q5H1X3</accession>
<organism>
    <name type="scientific">Xanthomonas oryzae pv. oryzae (strain KACC10331 / KXO85)</name>
    <dbReference type="NCBI Taxonomy" id="291331"/>
    <lineage>
        <taxon>Bacteria</taxon>
        <taxon>Pseudomonadati</taxon>
        <taxon>Pseudomonadota</taxon>
        <taxon>Gammaproteobacteria</taxon>
        <taxon>Lysobacterales</taxon>
        <taxon>Lysobacteraceae</taxon>
        <taxon>Xanthomonas</taxon>
    </lineage>
</organism>
<sequence>MTQKTILNDTHRALGAKMVDFGGWDMPIHYGSQLDEHHQVRRDAGMFDVSHMTVVDLHGARVRAFLRDLLANSVDKLKVCGKALYTCMLNPQGGVIDDLIVYYMSEDFFRLVVNAATREKDLQWIGEQAVRFDVRVEERSDFAMIAVQGPNARANVIDLLDPADTAAASKLGRFAALQTRSRDGIELFLARTGYTGEDGFEIVLPQEAAVAFWNALLAQGVKPAGLGARDTLRLEAGMHLYGQDMDDAVTPYEAALAWTIALDEGRDFIGRRVLESQKAQGAPRQLIGVVMDDKGVLRHGQAVFTASGEGEILSGTFSPTLGKAIAFARVPAGSIDQLRVDIRGKQVPLRAVKFPFVRDGQAQPGVLGD</sequence>
<proteinExistence type="inferred from homology"/>
<dbReference type="EC" id="2.1.2.10" evidence="1"/>
<dbReference type="EMBL" id="AE013598">
    <property type="protein sequence ID" value="AAW75048.1"/>
    <property type="molecule type" value="Genomic_DNA"/>
</dbReference>
<dbReference type="SMR" id="Q5H1X3"/>
<dbReference type="STRING" id="291331.XOO1794"/>
<dbReference type="KEGG" id="xoo:XOO1794"/>
<dbReference type="HOGENOM" id="CLU_007884_10_2_6"/>
<dbReference type="Proteomes" id="UP000006735">
    <property type="component" value="Chromosome"/>
</dbReference>
<dbReference type="GO" id="GO:0005829">
    <property type="term" value="C:cytosol"/>
    <property type="evidence" value="ECO:0007669"/>
    <property type="project" value="TreeGrafter"/>
</dbReference>
<dbReference type="GO" id="GO:0005960">
    <property type="term" value="C:glycine cleavage complex"/>
    <property type="evidence" value="ECO:0007669"/>
    <property type="project" value="InterPro"/>
</dbReference>
<dbReference type="GO" id="GO:0004047">
    <property type="term" value="F:aminomethyltransferase activity"/>
    <property type="evidence" value="ECO:0007669"/>
    <property type="project" value="UniProtKB-UniRule"/>
</dbReference>
<dbReference type="GO" id="GO:0008483">
    <property type="term" value="F:transaminase activity"/>
    <property type="evidence" value="ECO:0007669"/>
    <property type="project" value="UniProtKB-KW"/>
</dbReference>
<dbReference type="GO" id="GO:0019464">
    <property type="term" value="P:glycine decarboxylation via glycine cleavage system"/>
    <property type="evidence" value="ECO:0007669"/>
    <property type="project" value="UniProtKB-UniRule"/>
</dbReference>
<dbReference type="FunFam" id="2.40.30.110:FF:000001">
    <property type="entry name" value="Aminomethyltransferase"/>
    <property type="match status" value="1"/>
</dbReference>
<dbReference type="FunFam" id="3.30.70.1400:FF:000001">
    <property type="entry name" value="Aminomethyltransferase"/>
    <property type="match status" value="1"/>
</dbReference>
<dbReference type="FunFam" id="4.10.1250.10:FF:000001">
    <property type="entry name" value="Aminomethyltransferase"/>
    <property type="match status" value="1"/>
</dbReference>
<dbReference type="Gene3D" id="2.40.30.110">
    <property type="entry name" value="Aminomethyltransferase beta-barrel domains"/>
    <property type="match status" value="1"/>
</dbReference>
<dbReference type="Gene3D" id="3.30.70.1400">
    <property type="entry name" value="Aminomethyltransferase beta-barrel domains"/>
    <property type="match status" value="1"/>
</dbReference>
<dbReference type="Gene3D" id="4.10.1250.10">
    <property type="entry name" value="Aminomethyltransferase fragment"/>
    <property type="match status" value="1"/>
</dbReference>
<dbReference type="Gene3D" id="3.30.1360.120">
    <property type="entry name" value="Probable tRNA modification gtpase trme, domain 1"/>
    <property type="match status" value="1"/>
</dbReference>
<dbReference type="HAMAP" id="MF_00259">
    <property type="entry name" value="GcvT"/>
    <property type="match status" value="1"/>
</dbReference>
<dbReference type="InterPro" id="IPR006223">
    <property type="entry name" value="GCS_T"/>
</dbReference>
<dbReference type="InterPro" id="IPR022903">
    <property type="entry name" value="GCS_T_bac"/>
</dbReference>
<dbReference type="InterPro" id="IPR013977">
    <property type="entry name" value="GCST_C"/>
</dbReference>
<dbReference type="InterPro" id="IPR006222">
    <property type="entry name" value="GCV_T_N"/>
</dbReference>
<dbReference type="InterPro" id="IPR028896">
    <property type="entry name" value="GcvT/YgfZ/DmdA"/>
</dbReference>
<dbReference type="InterPro" id="IPR029043">
    <property type="entry name" value="GcvT/YgfZ_C"/>
</dbReference>
<dbReference type="InterPro" id="IPR027266">
    <property type="entry name" value="TrmE/GcvT_dom1"/>
</dbReference>
<dbReference type="NCBIfam" id="TIGR00528">
    <property type="entry name" value="gcvT"/>
    <property type="match status" value="1"/>
</dbReference>
<dbReference type="NCBIfam" id="NF001567">
    <property type="entry name" value="PRK00389.1"/>
    <property type="match status" value="1"/>
</dbReference>
<dbReference type="PANTHER" id="PTHR43757">
    <property type="entry name" value="AMINOMETHYLTRANSFERASE"/>
    <property type="match status" value="1"/>
</dbReference>
<dbReference type="PANTHER" id="PTHR43757:SF2">
    <property type="entry name" value="AMINOMETHYLTRANSFERASE, MITOCHONDRIAL"/>
    <property type="match status" value="1"/>
</dbReference>
<dbReference type="Pfam" id="PF01571">
    <property type="entry name" value="GCV_T"/>
    <property type="match status" value="1"/>
</dbReference>
<dbReference type="Pfam" id="PF08669">
    <property type="entry name" value="GCV_T_C"/>
    <property type="match status" value="1"/>
</dbReference>
<dbReference type="PIRSF" id="PIRSF006487">
    <property type="entry name" value="GcvT"/>
    <property type="match status" value="1"/>
</dbReference>
<dbReference type="SUPFAM" id="SSF101790">
    <property type="entry name" value="Aminomethyltransferase beta-barrel domain"/>
    <property type="match status" value="1"/>
</dbReference>
<dbReference type="SUPFAM" id="SSF103025">
    <property type="entry name" value="Folate-binding domain"/>
    <property type="match status" value="1"/>
</dbReference>
<comment type="function">
    <text evidence="1">The glycine cleavage system catalyzes the degradation of glycine.</text>
</comment>
<comment type="catalytic activity">
    <reaction evidence="1">
        <text>N(6)-[(R)-S(8)-aminomethyldihydrolipoyl]-L-lysyl-[protein] + (6S)-5,6,7,8-tetrahydrofolate = N(6)-[(R)-dihydrolipoyl]-L-lysyl-[protein] + (6R)-5,10-methylene-5,6,7,8-tetrahydrofolate + NH4(+)</text>
        <dbReference type="Rhea" id="RHEA:16945"/>
        <dbReference type="Rhea" id="RHEA-COMP:10475"/>
        <dbReference type="Rhea" id="RHEA-COMP:10492"/>
        <dbReference type="ChEBI" id="CHEBI:15636"/>
        <dbReference type="ChEBI" id="CHEBI:28938"/>
        <dbReference type="ChEBI" id="CHEBI:57453"/>
        <dbReference type="ChEBI" id="CHEBI:83100"/>
        <dbReference type="ChEBI" id="CHEBI:83143"/>
        <dbReference type="EC" id="2.1.2.10"/>
    </reaction>
</comment>
<comment type="subunit">
    <text evidence="1">The glycine cleavage system is composed of four proteins: P, T, L and H.</text>
</comment>
<comment type="similarity">
    <text evidence="1">Belongs to the GcvT family.</text>
</comment>
<keyword id="KW-0032">Aminotransferase</keyword>
<keyword id="KW-1185">Reference proteome</keyword>
<keyword id="KW-0808">Transferase</keyword>